<dbReference type="EC" id="2.1.3.15" evidence="1"/>
<dbReference type="EMBL" id="CP000238">
    <property type="protein sequence ID" value="ABF13894.1"/>
    <property type="molecule type" value="Genomic_DNA"/>
</dbReference>
<dbReference type="RefSeq" id="WP_011520702.1">
    <property type="nucleotide sequence ID" value="NC_007984.1"/>
</dbReference>
<dbReference type="SMR" id="Q1LSU5"/>
<dbReference type="STRING" id="374463.BCI_0539"/>
<dbReference type="KEGG" id="bci:BCI_0539"/>
<dbReference type="HOGENOM" id="CLU_015486_0_2_6"/>
<dbReference type="OrthoDB" id="9808023at2"/>
<dbReference type="UniPathway" id="UPA00655">
    <property type="reaction ID" value="UER00711"/>
</dbReference>
<dbReference type="Proteomes" id="UP000002427">
    <property type="component" value="Chromosome"/>
</dbReference>
<dbReference type="GO" id="GO:0009317">
    <property type="term" value="C:acetyl-CoA carboxylase complex"/>
    <property type="evidence" value="ECO:0007669"/>
    <property type="project" value="InterPro"/>
</dbReference>
<dbReference type="GO" id="GO:0003989">
    <property type="term" value="F:acetyl-CoA carboxylase activity"/>
    <property type="evidence" value="ECO:0007669"/>
    <property type="project" value="InterPro"/>
</dbReference>
<dbReference type="GO" id="GO:0005524">
    <property type="term" value="F:ATP binding"/>
    <property type="evidence" value="ECO:0007669"/>
    <property type="project" value="UniProtKB-KW"/>
</dbReference>
<dbReference type="GO" id="GO:0016743">
    <property type="term" value="F:carboxyl- or carbamoyltransferase activity"/>
    <property type="evidence" value="ECO:0007669"/>
    <property type="project" value="UniProtKB-UniRule"/>
</dbReference>
<dbReference type="GO" id="GO:0006633">
    <property type="term" value="P:fatty acid biosynthetic process"/>
    <property type="evidence" value="ECO:0007669"/>
    <property type="project" value="UniProtKB-KW"/>
</dbReference>
<dbReference type="GO" id="GO:2001295">
    <property type="term" value="P:malonyl-CoA biosynthetic process"/>
    <property type="evidence" value="ECO:0007669"/>
    <property type="project" value="UniProtKB-UniRule"/>
</dbReference>
<dbReference type="FunFam" id="3.90.226.10:FF:000008">
    <property type="entry name" value="Acetyl-coenzyme A carboxylase carboxyl transferase subunit alpha"/>
    <property type="match status" value="1"/>
</dbReference>
<dbReference type="Gene3D" id="3.90.226.10">
    <property type="entry name" value="2-enoyl-CoA Hydratase, Chain A, domain 1"/>
    <property type="match status" value="1"/>
</dbReference>
<dbReference type="HAMAP" id="MF_00823">
    <property type="entry name" value="AcetylCoA_CT_alpha"/>
    <property type="match status" value="1"/>
</dbReference>
<dbReference type="InterPro" id="IPR001095">
    <property type="entry name" value="Acetyl_CoA_COase_a_su"/>
</dbReference>
<dbReference type="InterPro" id="IPR029045">
    <property type="entry name" value="ClpP/crotonase-like_dom_sf"/>
</dbReference>
<dbReference type="InterPro" id="IPR011763">
    <property type="entry name" value="COA_CT_C"/>
</dbReference>
<dbReference type="NCBIfam" id="TIGR00513">
    <property type="entry name" value="accA"/>
    <property type="match status" value="1"/>
</dbReference>
<dbReference type="NCBIfam" id="NF041504">
    <property type="entry name" value="AccA_sub"/>
    <property type="match status" value="1"/>
</dbReference>
<dbReference type="NCBIfam" id="NF004344">
    <property type="entry name" value="PRK05724.1"/>
    <property type="match status" value="1"/>
</dbReference>
<dbReference type="PANTHER" id="PTHR42853">
    <property type="entry name" value="ACETYL-COENZYME A CARBOXYLASE CARBOXYL TRANSFERASE SUBUNIT ALPHA"/>
    <property type="match status" value="1"/>
</dbReference>
<dbReference type="PANTHER" id="PTHR42853:SF3">
    <property type="entry name" value="ACETYL-COENZYME A CARBOXYLASE CARBOXYL TRANSFERASE SUBUNIT ALPHA, CHLOROPLASTIC"/>
    <property type="match status" value="1"/>
</dbReference>
<dbReference type="Pfam" id="PF03255">
    <property type="entry name" value="ACCA"/>
    <property type="match status" value="1"/>
</dbReference>
<dbReference type="PRINTS" id="PR01069">
    <property type="entry name" value="ACCCTRFRASEA"/>
</dbReference>
<dbReference type="SUPFAM" id="SSF52096">
    <property type="entry name" value="ClpP/crotonase"/>
    <property type="match status" value="1"/>
</dbReference>
<dbReference type="PROSITE" id="PS50989">
    <property type="entry name" value="COA_CT_CTER"/>
    <property type="match status" value="1"/>
</dbReference>
<reference key="1">
    <citation type="journal article" date="2006" name="PLoS Biol.">
        <title>Metabolic complementarity and genomics of the dual bacterial symbiosis of sharpshooters.</title>
        <authorList>
            <person name="Wu D."/>
            <person name="Daugherty S.C."/>
            <person name="Van Aken S.E."/>
            <person name="Pai G.H."/>
            <person name="Watkins K.L."/>
            <person name="Khouri H."/>
            <person name="Tallon L.J."/>
            <person name="Zaborsky J.M."/>
            <person name="Dunbar H.E."/>
            <person name="Tran P.L."/>
            <person name="Moran N.A."/>
            <person name="Eisen J.A."/>
        </authorList>
    </citation>
    <scope>NUCLEOTIDE SEQUENCE [LARGE SCALE GENOMIC DNA]</scope>
</reference>
<feature type="chain" id="PRO_1000062580" description="Acetyl-coenzyme A carboxylase carboxyl transferase subunit alpha">
    <location>
        <begin position="1"/>
        <end position="319"/>
    </location>
</feature>
<feature type="domain" description="CoA carboxyltransferase C-terminal" evidence="2">
    <location>
        <begin position="43"/>
        <end position="296"/>
    </location>
</feature>
<name>ACCA_BAUCH</name>
<sequence length="319" mass="35638">MSINFIDFEQPIADIEAKIESLTSISSIDKTCDTNFNEEIKRLRDKSIELTRKIFAHLSAWQIAQLARHPCRPYMLDYVQYIFTDFDELAGDRAYADDKAIVGGLARINSRPVMIIGHQKGREIKEKIRRNFGMPAPEGYRKALRLMKMADRFSIPILTFIDTPGAYPGIGAEERGQSEAIATNLREMAYLRVPIVSTIIGEGGSGGALAIGVGDKVNMLKYSTYSVISPEGCASILWKSVDKAPLAAEAMGINAARLKKLKLIDSIIPEPLGGAHRDVAIMAASLKKQLLFDLSELDRMNEQELLDRRYNRIMKYGYC</sequence>
<proteinExistence type="inferred from homology"/>
<evidence type="ECO:0000255" key="1">
    <source>
        <dbReference type="HAMAP-Rule" id="MF_00823"/>
    </source>
</evidence>
<evidence type="ECO:0000255" key="2">
    <source>
        <dbReference type="PROSITE-ProRule" id="PRU01137"/>
    </source>
</evidence>
<organism>
    <name type="scientific">Baumannia cicadellinicola subsp. Homalodisca coagulata</name>
    <dbReference type="NCBI Taxonomy" id="374463"/>
    <lineage>
        <taxon>Bacteria</taxon>
        <taxon>Pseudomonadati</taxon>
        <taxon>Pseudomonadota</taxon>
        <taxon>Gammaproteobacteria</taxon>
        <taxon>Candidatus Palibaumannia</taxon>
    </lineage>
</organism>
<comment type="function">
    <text evidence="1">Component of the acetyl coenzyme A carboxylase (ACC) complex. First, biotin carboxylase catalyzes the carboxylation of biotin on its carrier protein (BCCP) and then the CO(2) group is transferred by the carboxyltransferase to acetyl-CoA to form malonyl-CoA.</text>
</comment>
<comment type="catalytic activity">
    <reaction evidence="1">
        <text>N(6)-carboxybiotinyl-L-lysyl-[protein] + acetyl-CoA = N(6)-biotinyl-L-lysyl-[protein] + malonyl-CoA</text>
        <dbReference type="Rhea" id="RHEA:54728"/>
        <dbReference type="Rhea" id="RHEA-COMP:10505"/>
        <dbReference type="Rhea" id="RHEA-COMP:10506"/>
        <dbReference type="ChEBI" id="CHEBI:57288"/>
        <dbReference type="ChEBI" id="CHEBI:57384"/>
        <dbReference type="ChEBI" id="CHEBI:83144"/>
        <dbReference type="ChEBI" id="CHEBI:83145"/>
        <dbReference type="EC" id="2.1.3.15"/>
    </reaction>
</comment>
<comment type="pathway">
    <text evidence="1">Lipid metabolism; malonyl-CoA biosynthesis; malonyl-CoA from acetyl-CoA: step 1/1.</text>
</comment>
<comment type="subunit">
    <text evidence="1">Acetyl-CoA carboxylase is a heterohexamer composed of biotin carboxyl carrier protein (AccB), biotin carboxylase (AccC) and two subunits each of ACCase subunit alpha (AccA) and ACCase subunit beta (AccD).</text>
</comment>
<comment type="subcellular location">
    <subcellularLocation>
        <location evidence="1">Cytoplasm</location>
    </subcellularLocation>
</comment>
<comment type="similarity">
    <text evidence="1">Belongs to the AccA family.</text>
</comment>
<keyword id="KW-0067">ATP-binding</keyword>
<keyword id="KW-0963">Cytoplasm</keyword>
<keyword id="KW-0275">Fatty acid biosynthesis</keyword>
<keyword id="KW-0276">Fatty acid metabolism</keyword>
<keyword id="KW-0444">Lipid biosynthesis</keyword>
<keyword id="KW-0443">Lipid metabolism</keyword>
<keyword id="KW-0547">Nucleotide-binding</keyword>
<keyword id="KW-1185">Reference proteome</keyword>
<keyword id="KW-0808">Transferase</keyword>
<protein>
    <recommendedName>
        <fullName evidence="1">Acetyl-coenzyme A carboxylase carboxyl transferase subunit alpha</fullName>
        <shortName evidence="1">ACCase subunit alpha</shortName>
        <shortName evidence="1">Acetyl-CoA carboxylase carboxyltransferase subunit alpha</shortName>
        <ecNumber evidence="1">2.1.3.15</ecNumber>
    </recommendedName>
</protein>
<gene>
    <name evidence="1" type="primary">accA</name>
    <name type="ordered locus">BCI_0539</name>
</gene>
<accession>Q1LSU5</accession>